<dbReference type="EMBL" id="CP001291">
    <property type="protein sequence ID" value="ACK72625.1"/>
    <property type="molecule type" value="Genomic_DNA"/>
</dbReference>
<dbReference type="RefSeq" id="WP_015956210.1">
    <property type="nucleotide sequence ID" value="NC_011729.1"/>
</dbReference>
<dbReference type="SMR" id="B7K6S6"/>
<dbReference type="STRING" id="65393.PCC7424_4255"/>
<dbReference type="KEGG" id="cyc:PCC7424_4255"/>
<dbReference type="eggNOG" id="COG0292">
    <property type="taxonomic scope" value="Bacteria"/>
</dbReference>
<dbReference type="HOGENOM" id="CLU_123265_0_1_3"/>
<dbReference type="OrthoDB" id="9808966at2"/>
<dbReference type="Proteomes" id="UP000002384">
    <property type="component" value="Chromosome"/>
</dbReference>
<dbReference type="GO" id="GO:1990904">
    <property type="term" value="C:ribonucleoprotein complex"/>
    <property type="evidence" value="ECO:0007669"/>
    <property type="project" value="UniProtKB-KW"/>
</dbReference>
<dbReference type="GO" id="GO:0005840">
    <property type="term" value="C:ribosome"/>
    <property type="evidence" value="ECO:0007669"/>
    <property type="project" value="UniProtKB-KW"/>
</dbReference>
<dbReference type="GO" id="GO:0019843">
    <property type="term" value="F:rRNA binding"/>
    <property type="evidence" value="ECO:0007669"/>
    <property type="project" value="UniProtKB-UniRule"/>
</dbReference>
<dbReference type="GO" id="GO:0003735">
    <property type="term" value="F:structural constituent of ribosome"/>
    <property type="evidence" value="ECO:0007669"/>
    <property type="project" value="InterPro"/>
</dbReference>
<dbReference type="GO" id="GO:0000027">
    <property type="term" value="P:ribosomal large subunit assembly"/>
    <property type="evidence" value="ECO:0007669"/>
    <property type="project" value="UniProtKB-UniRule"/>
</dbReference>
<dbReference type="GO" id="GO:0006412">
    <property type="term" value="P:translation"/>
    <property type="evidence" value="ECO:0007669"/>
    <property type="project" value="InterPro"/>
</dbReference>
<dbReference type="CDD" id="cd07026">
    <property type="entry name" value="Ribosomal_L20"/>
    <property type="match status" value="1"/>
</dbReference>
<dbReference type="FunFam" id="1.10.1900.20:FF:000001">
    <property type="entry name" value="50S ribosomal protein L20"/>
    <property type="match status" value="1"/>
</dbReference>
<dbReference type="Gene3D" id="6.10.160.10">
    <property type="match status" value="1"/>
</dbReference>
<dbReference type="Gene3D" id="1.10.1900.20">
    <property type="entry name" value="Ribosomal protein L20"/>
    <property type="match status" value="1"/>
</dbReference>
<dbReference type="HAMAP" id="MF_00382">
    <property type="entry name" value="Ribosomal_bL20"/>
    <property type="match status" value="1"/>
</dbReference>
<dbReference type="InterPro" id="IPR005813">
    <property type="entry name" value="Ribosomal_bL20"/>
</dbReference>
<dbReference type="InterPro" id="IPR049946">
    <property type="entry name" value="RIBOSOMAL_L20_CS"/>
</dbReference>
<dbReference type="InterPro" id="IPR035566">
    <property type="entry name" value="Ribosomal_protein_bL20_C"/>
</dbReference>
<dbReference type="NCBIfam" id="TIGR01032">
    <property type="entry name" value="rplT_bact"/>
    <property type="match status" value="1"/>
</dbReference>
<dbReference type="PANTHER" id="PTHR10986">
    <property type="entry name" value="39S RIBOSOMAL PROTEIN L20"/>
    <property type="match status" value="1"/>
</dbReference>
<dbReference type="Pfam" id="PF00453">
    <property type="entry name" value="Ribosomal_L20"/>
    <property type="match status" value="1"/>
</dbReference>
<dbReference type="PRINTS" id="PR00062">
    <property type="entry name" value="RIBOSOMALL20"/>
</dbReference>
<dbReference type="SUPFAM" id="SSF74731">
    <property type="entry name" value="Ribosomal protein L20"/>
    <property type="match status" value="1"/>
</dbReference>
<dbReference type="PROSITE" id="PS00937">
    <property type="entry name" value="RIBOSOMAL_L20"/>
    <property type="match status" value="1"/>
</dbReference>
<accession>B7K6S6</accession>
<gene>
    <name evidence="1" type="primary">rplT</name>
    <name evidence="1" type="synonym">rpl20</name>
    <name type="ordered locus">PCC7424_4255</name>
</gene>
<evidence type="ECO:0000255" key="1">
    <source>
        <dbReference type="HAMAP-Rule" id="MF_00382"/>
    </source>
</evidence>
<evidence type="ECO:0000305" key="2"/>
<organism>
    <name type="scientific">Gloeothece citriformis (strain PCC 7424)</name>
    <name type="common">Cyanothece sp. (strain PCC 7424)</name>
    <dbReference type="NCBI Taxonomy" id="65393"/>
    <lineage>
        <taxon>Bacteria</taxon>
        <taxon>Bacillati</taxon>
        <taxon>Cyanobacteriota</taxon>
        <taxon>Cyanophyceae</taxon>
        <taxon>Oscillatoriophycideae</taxon>
        <taxon>Chroococcales</taxon>
        <taxon>Aphanothecaceae</taxon>
        <taxon>Gloeothece</taxon>
        <taxon>Gloeothece citriformis</taxon>
    </lineage>
</organism>
<proteinExistence type="inferred from homology"/>
<name>RL20_GLOC7</name>
<keyword id="KW-1185">Reference proteome</keyword>
<keyword id="KW-0687">Ribonucleoprotein</keyword>
<keyword id="KW-0689">Ribosomal protein</keyword>
<keyword id="KW-0694">RNA-binding</keyword>
<keyword id="KW-0699">rRNA-binding</keyword>
<sequence>MTRVKRGNVARKRRKKILKLAKGFRGSHSKLFRTANQQVMKALRNAYRDRRKKKRDFRRLWITRINASARQNGISYSKLTGQMKKANIQLNRKMLAQLAVLDPQAFAKVVEVASQAQ</sequence>
<feature type="chain" id="PRO_1000122302" description="Large ribosomal subunit protein bL20">
    <location>
        <begin position="1"/>
        <end position="117"/>
    </location>
</feature>
<protein>
    <recommendedName>
        <fullName evidence="1">Large ribosomal subunit protein bL20</fullName>
    </recommendedName>
    <alternativeName>
        <fullName evidence="2">50S ribosomal protein L20</fullName>
    </alternativeName>
</protein>
<reference key="1">
    <citation type="journal article" date="2011" name="MBio">
        <title>Novel metabolic attributes of the genus Cyanothece, comprising a group of unicellular nitrogen-fixing Cyanobacteria.</title>
        <authorList>
            <person name="Bandyopadhyay A."/>
            <person name="Elvitigala T."/>
            <person name="Welsh E."/>
            <person name="Stockel J."/>
            <person name="Liberton M."/>
            <person name="Min H."/>
            <person name="Sherman L.A."/>
            <person name="Pakrasi H.B."/>
        </authorList>
    </citation>
    <scope>NUCLEOTIDE SEQUENCE [LARGE SCALE GENOMIC DNA]</scope>
    <source>
        <strain>PCC 7424</strain>
    </source>
</reference>
<comment type="function">
    <text evidence="1">Binds directly to 23S ribosomal RNA and is necessary for the in vitro assembly process of the 50S ribosomal subunit. It is not involved in the protein synthesizing functions of that subunit.</text>
</comment>
<comment type="similarity">
    <text evidence="1">Belongs to the bacterial ribosomal protein bL20 family.</text>
</comment>